<comment type="function">
    <text evidence="1">Catalyzes the conversion of 1-hydroxy-2-methyl-2-(E)-butenyl 4-diphosphate (HMBPP) into a mixture of isopentenyl diphosphate (IPP) and dimethylallyl diphosphate (DMAPP). Acts in the terminal step of the DOXP/MEP pathway for isoprenoid precursor biosynthesis.</text>
</comment>
<comment type="catalytic activity">
    <reaction evidence="1">
        <text>isopentenyl diphosphate + 2 oxidized [2Fe-2S]-[ferredoxin] + H2O = (2E)-4-hydroxy-3-methylbut-2-enyl diphosphate + 2 reduced [2Fe-2S]-[ferredoxin] + 2 H(+)</text>
        <dbReference type="Rhea" id="RHEA:24488"/>
        <dbReference type="Rhea" id="RHEA-COMP:10000"/>
        <dbReference type="Rhea" id="RHEA-COMP:10001"/>
        <dbReference type="ChEBI" id="CHEBI:15377"/>
        <dbReference type="ChEBI" id="CHEBI:15378"/>
        <dbReference type="ChEBI" id="CHEBI:33737"/>
        <dbReference type="ChEBI" id="CHEBI:33738"/>
        <dbReference type="ChEBI" id="CHEBI:128753"/>
        <dbReference type="ChEBI" id="CHEBI:128769"/>
        <dbReference type="EC" id="1.17.7.4"/>
    </reaction>
</comment>
<comment type="catalytic activity">
    <reaction evidence="1">
        <text>dimethylallyl diphosphate + 2 oxidized [2Fe-2S]-[ferredoxin] + H2O = (2E)-4-hydroxy-3-methylbut-2-enyl diphosphate + 2 reduced [2Fe-2S]-[ferredoxin] + 2 H(+)</text>
        <dbReference type="Rhea" id="RHEA:24825"/>
        <dbReference type="Rhea" id="RHEA-COMP:10000"/>
        <dbReference type="Rhea" id="RHEA-COMP:10001"/>
        <dbReference type="ChEBI" id="CHEBI:15377"/>
        <dbReference type="ChEBI" id="CHEBI:15378"/>
        <dbReference type="ChEBI" id="CHEBI:33737"/>
        <dbReference type="ChEBI" id="CHEBI:33738"/>
        <dbReference type="ChEBI" id="CHEBI:57623"/>
        <dbReference type="ChEBI" id="CHEBI:128753"/>
        <dbReference type="EC" id="1.17.7.4"/>
    </reaction>
</comment>
<comment type="cofactor">
    <cofactor evidence="1">
        <name>[4Fe-4S] cluster</name>
        <dbReference type="ChEBI" id="CHEBI:49883"/>
    </cofactor>
    <text evidence="1">Binds 1 [4Fe-4S] cluster per subunit.</text>
</comment>
<comment type="pathway">
    <text evidence="1">Isoprenoid biosynthesis; dimethylallyl diphosphate biosynthesis; dimethylallyl diphosphate from (2E)-4-hydroxy-3-methylbutenyl diphosphate: step 1/1.</text>
</comment>
<comment type="pathway">
    <text evidence="1">Isoprenoid biosynthesis; isopentenyl diphosphate biosynthesis via DXP pathway; isopentenyl diphosphate from 1-deoxy-D-xylulose 5-phosphate: step 6/6.</text>
</comment>
<comment type="similarity">
    <text evidence="1">Belongs to the IspH family.</text>
</comment>
<protein>
    <recommendedName>
        <fullName evidence="1">4-hydroxy-3-methylbut-2-enyl diphosphate reductase</fullName>
        <shortName evidence="1">HMBPP reductase</shortName>
        <ecNumber evidence="1">1.17.7.4</ecNumber>
    </recommendedName>
</protein>
<organism>
    <name type="scientific">Microcystis aeruginosa (strain NIES-843 / IAM M-2473)</name>
    <dbReference type="NCBI Taxonomy" id="449447"/>
    <lineage>
        <taxon>Bacteria</taxon>
        <taxon>Bacillati</taxon>
        <taxon>Cyanobacteriota</taxon>
        <taxon>Cyanophyceae</taxon>
        <taxon>Oscillatoriophycideae</taxon>
        <taxon>Chroococcales</taxon>
        <taxon>Microcystaceae</taxon>
        <taxon>Microcystis</taxon>
    </lineage>
</organism>
<accession>B0JVA7</accession>
<evidence type="ECO:0000255" key="1">
    <source>
        <dbReference type="HAMAP-Rule" id="MF_00191"/>
    </source>
</evidence>
<proteinExistence type="inferred from homology"/>
<sequence length="402" mass="45595">MDTKSFKRTLQQSDNYNRKGFGHKEEVMDAMTNEYQSDLIQEIRENNYRLQRGDVTIYLAQAFGFCWGVERAVAMAYETRQHFPQERIWITNEIIHNPSVNQRLRSMAVGFIPVENGQKDFTVVESGDVVILPAFGASVSEMQILNDKGCMIVDTTCPWVSKVWNSVEKHKKSDHTSIIHGKYNHEETIATSSFAGTYLIVLNLDQANYVANYILHGGDKNEFLEKFKNAHSQGFDPDRDLDYIGIANQTTMLKSETEEIGKLFEHTMLRKYGPIDFKDHFMSFNTICDATQERQDAIFELVKEPLSLMVVIGGYNSSNTTHLQEIAIERAIPSYHIDSAERILPGNRIEHKPLGDDLIITDNWLNEGKIVVGVTSGASTPDKVVEEVIEKIFAFKSSLVPG</sequence>
<name>ISPH_MICAN</name>
<keyword id="KW-0004">4Fe-4S</keyword>
<keyword id="KW-0408">Iron</keyword>
<keyword id="KW-0411">Iron-sulfur</keyword>
<keyword id="KW-0414">Isoprene biosynthesis</keyword>
<keyword id="KW-0479">Metal-binding</keyword>
<keyword id="KW-0560">Oxidoreductase</keyword>
<reference key="1">
    <citation type="journal article" date="2007" name="DNA Res.">
        <title>Complete genomic structure of the bloom-forming toxic cyanobacterium Microcystis aeruginosa NIES-843.</title>
        <authorList>
            <person name="Kaneko T."/>
            <person name="Nakajima N."/>
            <person name="Okamoto S."/>
            <person name="Suzuki I."/>
            <person name="Tanabe Y."/>
            <person name="Tamaoki M."/>
            <person name="Nakamura Y."/>
            <person name="Kasai F."/>
            <person name="Watanabe A."/>
            <person name="Kawashima K."/>
            <person name="Kishida Y."/>
            <person name="Ono A."/>
            <person name="Shimizu Y."/>
            <person name="Takahashi C."/>
            <person name="Minami C."/>
            <person name="Fujishiro T."/>
            <person name="Kohara M."/>
            <person name="Katoh M."/>
            <person name="Nakazaki N."/>
            <person name="Nakayama S."/>
            <person name="Yamada M."/>
            <person name="Tabata S."/>
            <person name="Watanabe M.M."/>
        </authorList>
    </citation>
    <scope>NUCLEOTIDE SEQUENCE [LARGE SCALE GENOMIC DNA]</scope>
    <source>
        <strain>NIES-843 / IAM M-247</strain>
    </source>
</reference>
<gene>
    <name evidence="1" type="primary">ispH</name>
    <name type="ordered locus">MAE_16190</name>
</gene>
<feature type="chain" id="PRO_1000077519" description="4-hydroxy-3-methylbut-2-enyl diphosphate reductase">
    <location>
        <begin position="1"/>
        <end position="402"/>
    </location>
</feature>
<feature type="active site" description="Proton donor" evidence="1">
    <location>
        <position position="187"/>
    </location>
</feature>
<feature type="binding site" evidence="1">
    <location>
        <position position="66"/>
    </location>
    <ligand>
        <name>[4Fe-4S] cluster</name>
        <dbReference type="ChEBI" id="CHEBI:49883"/>
    </ligand>
</feature>
<feature type="binding site" evidence="1">
    <location>
        <position position="96"/>
    </location>
    <ligand>
        <name>(2E)-4-hydroxy-3-methylbut-2-enyl diphosphate</name>
        <dbReference type="ChEBI" id="CHEBI:128753"/>
    </ligand>
</feature>
<feature type="binding site" evidence="1">
    <location>
        <position position="96"/>
    </location>
    <ligand>
        <name>dimethylallyl diphosphate</name>
        <dbReference type="ChEBI" id="CHEBI:57623"/>
    </ligand>
</feature>
<feature type="binding site" evidence="1">
    <location>
        <position position="96"/>
    </location>
    <ligand>
        <name>isopentenyl diphosphate</name>
        <dbReference type="ChEBI" id="CHEBI:128769"/>
    </ligand>
</feature>
<feature type="binding site" evidence="1">
    <location>
        <position position="157"/>
    </location>
    <ligand>
        <name>[4Fe-4S] cluster</name>
        <dbReference type="ChEBI" id="CHEBI:49883"/>
    </ligand>
</feature>
<feature type="binding site" evidence="1">
    <location>
        <position position="185"/>
    </location>
    <ligand>
        <name>(2E)-4-hydroxy-3-methylbut-2-enyl diphosphate</name>
        <dbReference type="ChEBI" id="CHEBI:128753"/>
    </ligand>
</feature>
<feature type="binding site" evidence="1">
    <location>
        <position position="185"/>
    </location>
    <ligand>
        <name>dimethylallyl diphosphate</name>
        <dbReference type="ChEBI" id="CHEBI:57623"/>
    </ligand>
</feature>
<feature type="binding site" evidence="1">
    <location>
        <position position="185"/>
    </location>
    <ligand>
        <name>isopentenyl diphosphate</name>
        <dbReference type="ChEBI" id="CHEBI:128769"/>
    </ligand>
</feature>
<feature type="binding site" evidence="1">
    <location>
        <position position="250"/>
    </location>
    <ligand>
        <name>(2E)-4-hydroxy-3-methylbut-2-enyl diphosphate</name>
        <dbReference type="ChEBI" id="CHEBI:128753"/>
    </ligand>
</feature>
<feature type="binding site" evidence="1">
    <location>
        <position position="288"/>
    </location>
    <ligand>
        <name>[4Fe-4S] cluster</name>
        <dbReference type="ChEBI" id="CHEBI:49883"/>
    </ligand>
</feature>
<feature type="binding site" evidence="1">
    <location>
        <position position="317"/>
    </location>
    <ligand>
        <name>(2E)-4-hydroxy-3-methylbut-2-enyl diphosphate</name>
        <dbReference type="ChEBI" id="CHEBI:128753"/>
    </ligand>
</feature>
<feature type="binding site" evidence="1">
    <location>
        <position position="317"/>
    </location>
    <ligand>
        <name>dimethylallyl diphosphate</name>
        <dbReference type="ChEBI" id="CHEBI:57623"/>
    </ligand>
</feature>
<feature type="binding site" evidence="1">
    <location>
        <position position="317"/>
    </location>
    <ligand>
        <name>isopentenyl diphosphate</name>
        <dbReference type="ChEBI" id="CHEBI:128769"/>
    </ligand>
</feature>
<feature type="binding site" evidence="1">
    <location>
        <position position="318"/>
    </location>
    <ligand>
        <name>(2E)-4-hydroxy-3-methylbut-2-enyl diphosphate</name>
        <dbReference type="ChEBI" id="CHEBI:128753"/>
    </ligand>
</feature>
<feature type="binding site" evidence="1">
    <location>
        <position position="318"/>
    </location>
    <ligand>
        <name>dimethylallyl diphosphate</name>
        <dbReference type="ChEBI" id="CHEBI:57623"/>
    </ligand>
</feature>
<feature type="binding site" evidence="1">
    <location>
        <position position="318"/>
    </location>
    <ligand>
        <name>isopentenyl diphosphate</name>
        <dbReference type="ChEBI" id="CHEBI:128769"/>
    </ligand>
</feature>
<feature type="binding site" evidence="1">
    <location>
        <position position="319"/>
    </location>
    <ligand>
        <name>(2E)-4-hydroxy-3-methylbut-2-enyl diphosphate</name>
        <dbReference type="ChEBI" id="CHEBI:128753"/>
    </ligand>
</feature>
<feature type="binding site" evidence="1">
    <location>
        <position position="319"/>
    </location>
    <ligand>
        <name>dimethylallyl diphosphate</name>
        <dbReference type="ChEBI" id="CHEBI:57623"/>
    </ligand>
</feature>
<feature type="binding site" evidence="1">
    <location>
        <position position="319"/>
    </location>
    <ligand>
        <name>isopentenyl diphosphate</name>
        <dbReference type="ChEBI" id="CHEBI:128769"/>
    </ligand>
</feature>
<feature type="binding site" evidence="1">
    <location>
        <position position="379"/>
    </location>
    <ligand>
        <name>(2E)-4-hydroxy-3-methylbut-2-enyl diphosphate</name>
        <dbReference type="ChEBI" id="CHEBI:128753"/>
    </ligand>
</feature>
<feature type="binding site" evidence="1">
    <location>
        <position position="379"/>
    </location>
    <ligand>
        <name>dimethylallyl diphosphate</name>
        <dbReference type="ChEBI" id="CHEBI:57623"/>
    </ligand>
</feature>
<feature type="binding site" evidence="1">
    <location>
        <position position="379"/>
    </location>
    <ligand>
        <name>isopentenyl diphosphate</name>
        <dbReference type="ChEBI" id="CHEBI:128769"/>
    </ligand>
</feature>
<dbReference type="EC" id="1.17.7.4" evidence="1"/>
<dbReference type="EMBL" id="AP009552">
    <property type="protein sequence ID" value="BAG01441.1"/>
    <property type="molecule type" value="Genomic_DNA"/>
</dbReference>
<dbReference type="RefSeq" id="WP_012264968.1">
    <property type="nucleotide sequence ID" value="NC_010296.1"/>
</dbReference>
<dbReference type="SMR" id="B0JVA7"/>
<dbReference type="STRING" id="449447.MAE_16190"/>
<dbReference type="PaxDb" id="449447-MAE_16190"/>
<dbReference type="EnsemblBacteria" id="BAG01441">
    <property type="protein sequence ID" value="BAG01441"/>
    <property type="gene ID" value="MAE_16190"/>
</dbReference>
<dbReference type="KEGG" id="mar:MAE_16190"/>
<dbReference type="PATRIC" id="fig|449447.4.peg.1488"/>
<dbReference type="eggNOG" id="COG0761">
    <property type="taxonomic scope" value="Bacteria"/>
</dbReference>
<dbReference type="HOGENOM" id="CLU_027486_4_0_3"/>
<dbReference type="BioCyc" id="MAER449447:MAE_RS07125-MONOMER"/>
<dbReference type="UniPathway" id="UPA00056">
    <property type="reaction ID" value="UER00097"/>
</dbReference>
<dbReference type="UniPathway" id="UPA00059">
    <property type="reaction ID" value="UER00105"/>
</dbReference>
<dbReference type="Proteomes" id="UP000001510">
    <property type="component" value="Chromosome"/>
</dbReference>
<dbReference type="GO" id="GO:0051539">
    <property type="term" value="F:4 iron, 4 sulfur cluster binding"/>
    <property type="evidence" value="ECO:0007669"/>
    <property type="project" value="UniProtKB-UniRule"/>
</dbReference>
<dbReference type="GO" id="GO:0051745">
    <property type="term" value="F:4-hydroxy-3-methylbut-2-enyl diphosphate reductase activity"/>
    <property type="evidence" value="ECO:0007669"/>
    <property type="project" value="UniProtKB-UniRule"/>
</dbReference>
<dbReference type="GO" id="GO:0046872">
    <property type="term" value="F:metal ion binding"/>
    <property type="evidence" value="ECO:0007669"/>
    <property type="project" value="UniProtKB-KW"/>
</dbReference>
<dbReference type="GO" id="GO:0050992">
    <property type="term" value="P:dimethylallyl diphosphate biosynthetic process"/>
    <property type="evidence" value="ECO:0007669"/>
    <property type="project" value="UniProtKB-UniRule"/>
</dbReference>
<dbReference type="GO" id="GO:0019288">
    <property type="term" value="P:isopentenyl diphosphate biosynthetic process, methylerythritol 4-phosphate pathway"/>
    <property type="evidence" value="ECO:0007669"/>
    <property type="project" value="UniProtKB-UniRule"/>
</dbReference>
<dbReference type="GO" id="GO:0016114">
    <property type="term" value="P:terpenoid biosynthetic process"/>
    <property type="evidence" value="ECO:0007669"/>
    <property type="project" value="UniProtKB-UniRule"/>
</dbReference>
<dbReference type="CDD" id="cd13944">
    <property type="entry name" value="lytB_ispH"/>
    <property type="match status" value="1"/>
</dbReference>
<dbReference type="Gene3D" id="3.40.50.11270">
    <property type="match status" value="1"/>
</dbReference>
<dbReference type="Gene3D" id="3.40.1010.20">
    <property type="entry name" value="4-hydroxy-3-methylbut-2-enyl diphosphate reductase, catalytic domain"/>
    <property type="match status" value="2"/>
</dbReference>
<dbReference type="HAMAP" id="MF_00191">
    <property type="entry name" value="IspH"/>
    <property type="match status" value="1"/>
</dbReference>
<dbReference type="InterPro" id="IPR003451">
    <property type="entry name" value="LytB/IspH"/>
</dbReference>
<dbReference type="NCBIfam" id="TIGR00216">
    <property type="entry name" value="ispH_lytB"/>
    <property type="match status" value="1"/>
</dbReference>
<dbReference type="NCBIfam" id="NF009911">
    <property type="entry name" value="PRK13371.1"/>
    <property type="match status" value="1"/>
</dbReference>
<dbReference type="PANTHER" id="PTHR31619">
    <property type="entry name" value="4-HYDROXY-3-METHYLBUT-2-ENYL DIPHOSPHATE REDUCTASE, CHLOROPLASTIC"/>
    <property type="match status" value="1"/>
</dbReference>
<dbReference type="PANTHER" id="PTHR31619:SF5">
    <property type="entry name" value="4-HYDROXY-3-METHYLBUT-2-ENYL DIPHOSPHATE REDUCTASE, CHLOROPLASTIC"/>
    <property type="match status" value="1"/>
</dbReference>
<dbReference type="Pfam" id="PF02401">
    <property type="entry name" value="LYTB"/>
    <property type="match status" value="1"/>
</dbReference>